<comment type="function">
    <text evidence="2">Participates in electron transfer between P700 and the cytochrome b6-f complex in photosystem I.</text>
</comment>
<comment type="cofactor">
    <cofactor evidence="2">
        <name>Cu(2+)</name>
        <dbReference type="ChEBI" id="CHEBI:29036"/>
    </cofactor>
</comment>
<comment type="subcellular location">
    <subcellularLocation>
        <location evidence="2">Plastid</location>
        <location evidence="2">Chloroplast thylakoid membrane</location>
        <topology evidence="2">Peripheral membrane protein</topology>
        <orientation evidence="2">Lumenal side</orientation>
    </subcellularLocation>
    <text>Loosely bound to the inner thylakoid membrane surface in chloroplasts (By similarity).</text>
</comment>
<comment type="similarity">
    <text evidence="3">Belongs to the plastocyanin family.</text>
</comment>
<feature type="transit peptide" description="Chloroplast" evidence="1">
    <location>
        <begin position="1"/>
        <end position="57"/>
    </location>
</feature>
<feature type="chain" id="PRO_0000293076" description="Plastocyanin, chloroplastic">
    <location>
        <begin position="58"/>
        <end position="154"/>
    </location>
</feature>
<feature type="domain" description="Plastocyanin-like">
    <location>
        <begin position="58"/>
        <end position="154"/>
    </location>
</feature>
<feature type="binding site" evidence="2">
    <location>
        <position position="94"/>
    </location>
    <ligand>
        <name>Cu cation</name>
        <dbReference type="ChEBI" id="CHEBI:23378"/>
    </ligand>
</feature>
<feature type="binding site" evidence="2">
    <location>
        <position position="139"/>
    </location>
    <ligand>
        <name>Cu cation</name>
        <dbReference type="ChEBI" id="CHEBI:23378"/>
    </ligand>
</feature>
<feature type="binding site" evidence="2">
    <location>
        <position position="142"/>
    </location>
    <ligand>
        <name>Cu cation</name>
        <dbReference type="ChEBI" id="CHEBI:23378"/>
    </ligand>
</feature>
<feature type="binding site" evidence="2">
    <location>
        <position position="147"/>
    </location>
    <ligand>
        <name>Cu cation</name>
        <dbReference type="ChEBI" id="CHEBI:23378"/>
    </ligand>
</feature>
<feature type="sequence conflict" description="In Ref. 1; AAB63590." evidence="3" ref="1">
    <original>RS</original>
    <variation>SI</variation>
    <location>
        <begin position="25"/>
        <end position="26"/>
    </location>
</feature>
<feature type="sequence conflict" description="In Ref. 1; AAB63590." evidence="3" ref="1">
    <original>E</original>
    <variation>K</variation>
    <location>
        <position position="100"/>
    </location>
</feature>
<feature type="sequence conflict" description="In Ref. 1; AAB63590." evidence="3" ref="1">
    <original>DV</original>
    <variation>NL</variation>
    <location>
        <begin position="108"/>
        <end position="109"/>
    </location>
</feature>
<keyword id="KW-0150">Chloroplast</keyword>
<keyword id="KW-0186">Copper</keyword>
<keyword id="KW-0249">Electron transport</keyword>
<keyword id="KW-0472">Membrane</keyword>
<keyword id="KW-0479">Metal-binding</keyword>
<keyword id="KW-0934">Plastid</keyword>
<keyword id="KW-1185">Reference proteome</keyword>
<keyword id="KW-0793">Thylakoid</keyword>
<keyword id="KW-0809">Transit peptide</keyword>
<keyword id="KW-0813">Transport</keyword>
<gene>
    <name type="primary">PETE</name>
    <name type="ORF">OsI_020529</name>
</gene>
<evidence type="ECO:0000250" key="1"/>
<evidence type="ECO:0000250" key="2">
    <source>
        <dbReference type="UniProtKB" id="P18068"/>
    </source>
</evidence>
<evidence type="ECO:0000305" key="3"/>
<name>PLAS_ORYSI</name>
<protein>
    <recommendedName>
        <fullName>Plastocyanin, chloroplastic</fullName>
    </recommendedName>
</protein>
<reference key="1">
    <citation type="submission" date="1997-06" db="EMBL/GenBank/DDBJ databases">
        <title>Isolation and characterization of plastocyanin precursor from rice.</title>
        <authorList>
            <person name="Lee M.C."/>
            <person name="Kim C.S."/>
            <person name="Yi B.Y."/>
            <person name="Lee J.S."/>
            <person name="Eun M.Y."/>
        </authorList>
    </citation>
    <scope>NUCLEOTIDE SEQUENCE [MRNA]</scope>
    <source>
        <strain>cv. Milyang 23</strain>
        <tissue>Immature seed</tissue>
    </source>
</reference>
<reference key="2">
    <citation type="journal article" date="2005" name="PLoS Biol.">
        <title>The genomes of Oryza sativa: a history of duplications.</title>
        <authorList>
            <person name="Yu J."/>
            <person name="Wang J."/>
            <person name="Lin W."/>
            <person name="Li S."/>
            <person name="Li H."/>
            <person name="Zhou J."/>
            <person name="Ni P."/>
            <person name="Dong W."/>
            <person name="Hu S."/>
            <person name="Zeng C."/>
            <person name="Zhang J."/>
            <person name="Zhang Y."/>
            <person name="Li R."/>
            <person name="Xu Z."/>
            <person name="Li S."/>
            <person name="Li X."/>
            <person name="Zheng H."/>
            <person name="Cong L."/>
            <person name="Lin L."/>
            <person name="Yin J."/>
            <person name="Geng J."/>
            <person name="Li G."/>
            <person name="Shi J."/>
            <person name="Liu J."/>
            <person name="Lv H."/>
            <person name="Li J."/>
            <person name="Wang J."/>
            <person name="Deng Y."/>
            <person name="Ran L."/>
            <person name="Shi X."/>
            <person name="Wang X."/>
            <person name="Wu Q."/>
            <person name="Li C."/>
            <person name="Ren X."/>
            <person name="Wang J."/>
            <person name="Wang X."/>
            <person name="Li D."/>
            <person name="Liu D."/>
            <person name="Zhang X."/>
            <person name="Ji Z."/>
            <person name="Zhao W."/>
            <person name="Sun Y."/>
            <person name="Zhang Z."/>
            <person name="Bao J."/>
            <person name="Han Y."/>
            <person name="Dong L."/>
            <person name="Ji J."/>
            <person name="Chen P."/>
            <person name="Wu S."/>
            <person name="Liu J."/>
            <person name="Xiao Y."/>
            <person name="Bu D."/>
            <person name="Tan J."/>
            <person name="Yang L."/>
            <person name="Ye C."/>
            <person name="Zhang J."/>
            <person name="Xu J."/>
            <person name="Zhou Y."/>
            <person name="Yu Y."/>
            <person name="Zhang B."/>
            <person name="Zhuang S."/>
            <person name="Wei H."/>
            <person name="Liu B."/>
            <person name="Lei M."/>
            <person name="Yu H."/>
            <person name="Li Y."/>
            <person name="Xu H."/>
            <person name="Wei S."/>
            <person name="He X."/>
            <person name="Fang L."/>
            <person name="Zhang Z."/>
            <person name="Zhang Y."/>
            <person name="Huang X."/>
            <person name="Su Z."/>
            <person name="Tong W."/>
            <person name="Li J."/>
            <person name="Tong Z."/>
            <person name="Li S."/>
            <person name="Ye J."/>
            <person name="Wang L."/>
            <person name="Fang L."/>
            <person name="Lei T."/>
            <person name="Chen C.-S."/>
            <person name="Chen H.-C."/>
            <person name="Xu Z."/>
            <person name="Li H."/>
            <person name="Huang H."/>
            <person name="Zhang F."/>
            <person name="Xu H."/>
            <person name="Li N."/>
            <person name="Zhao C."/>
            <person name="Li S."/>
            <person name="Dong L."/>
            <person name="Huang Y."/>
            <person name="Li L."/>
            <person name="Xi Y."/>
            <person name="Qi Q."/>
            <person name="Li W."/>
            <person name="Zhang B."/>
            <person name="Hu W."/>
            <person name="Zhang Y."/>
            <person name="Tian X."/>
            <person name="Jiao Y."/>
            <person name="Liang X."/>
            <person name="Jin J."/>
            <person name="Gao L."/>
            <person name="Zheng W."/>
            <person name="Hao B."/>
            <person name="Liu S.-M."/>
            <person name="Wang W."/>
            <person name="Yuan L."/>
            <person name="Cao M."/>
            <person name="McDermott J."/>
            <person name="Samudrala R."/>
            <person name="Wang J."/>
            <person name="Wong G.K.-S."/>
            <person name="Yang H."/>
        </authorList>
    </citation>
    <scope>NUCLEOTIDE SEQUENCE [LARGE SCALE GENOMIC DNA]</scope>
    <source>
        <strain>cv. 93-11</strain>
    </source>
</reference>
<sequence>MAALSSAAVTIPSMAPSAPGRRRMRSSLVVRASLGKAAGAAAVAVAASAMLAGGAMAQEVLLGANGGVLVFEPNDFTVKSGETITFKNNAGFPHNVVFDEDAVPSGVDVSKISQEEYLNAPGETFSVTLTVPGTYGFYCEPHAGAGMVGKVTVN</sequence>
<organism>
    <name type="scientific">Oryza sativa subsp. indica</name>
    <name type="common">Rice</name>
    <dbReference type="NCBI Taxonomy" id="39946"/>
    <lineage>
        <taxon>Eukaryota</taxon>
        <taxon>Viridiplantae</taxon>
        <taxon>Streptophyta</taxon>
        <taxon>Embryophyta</taxon>
        <taxon>Tracheophyta</taxon>
        <taxon>Spermatophyta</taxon>
        <taxon>Magnoliopsida</taxon>
        <taxon>Liliopsida</taxon>
        <taxon>Poales</taxon>
        <taxon>Poaceae</taxon>
        <taxon>BOP clade</taxon>
        <taxon>Oryzoideae</taxon>
        <taxon>Oryzeae</taxon>
        <taxon>Oryzinae</taxon>
        <taxon>Oryza</taxon>
        <taxon>Oryza sativa</taxon>
    </lineage>
</organism>
<proteinExistence type="evidence at transcript level"/>
<dbReference type="EMBL" id="AF009412">
    <property type="protein sequence ID" value="AAB63590.1"/>
    <property type="molecule type" value="mRNA"/>
</dbReference>
<dbReference type="EMBL" id="CM000131">
    <property type="protein sequence ID" value="EAY99296.1"/>
    <property type="molecule type" value="Genomic_DNA"/>
</dbReference>
<dbReference type="PIR" id="T03584">
    <property type="entry name" value="T03584"/>
</dbReference>
<dbReference type="SMR" id="A2Y886"/>
<dbReference type="STRING" id="39946.A2Y886"/>
<dbReference type="EnsemblPlants" id="BGIOSGA022117-TA">
    <property type="protein sequence ID" value="BGIOSGA022117-PA"/>
    <property type="gene ID" value="BGIOSGA022117"/>
</dbReference>
<dbReference type="EnsemblPlants" id="OsGoSa_06g0000050.01">
    <property type="protein sequence ID" value="OsGoSa_06g0000050.01"/>
    <property type="gene ID" value="OsGoSa_06g0000050"/>
</dbReference>
<dbReference type="EnsemblPlants" id="OsIR64_06g0000040.01">
    <property type="protein sequence ID" value="OsIR64_06g0000040.01"/>
    <property type="gene ID" value="OsIR64_06g0000040"/>
</dbReference>
<dbReference type="EnsemblPlants" id="OsKYG_06g0000050.01">
    <property type="protein sequence ID" value="OsKYG_06g0000050.01"/>
    <property type="gene ID" value="OsKYG_06g0000050"/>
</dbReference>
<dbReference type="EnsemblPlants" id="OsLaMu_06g0000040.01">
    <property type="protein sequence ID" value="OsLaMu_06g0000040.01"/>
    <property type="gene ID" value="OsLaMu_06g0000040"/>
</dbReference>
<dbReference type="EnsemblPlants" id="OsLima_06g0000050.01">
    <property type="protein sequence ID" value="OsLima_06g0000050.01"/>
    <property type="gene ID" value="OsLima_06g0000050"/>
</dbReference>
<dbReference type="EnsemblPlants" id="OsLiXu_06g0000040.01">
    <property type="protein sequence ID" value="OsLiXu_06g0000040.01"/>
    <property type="gene ID" value="OsLiXu_06g0000040"/>
</dbReference>
<dbReference type="EnsemblPlants" id="OsMH63_06G000040_01">
    <property type="protein sequence ID" value="OsMH63_06G000040_01"/>
    <property type="gene ID" value="OsMH63_06G000040"/>
</dbReference>
<dbReference type="EnsemblPlants" id="OsPr106_06g0000050.01">
    <property type="protein sequence ID" value="OsPr106_06g0000050.01"/>
    <property type="gene ID" value="OsPr106_06g0000050"/>
</dbReference>
<dbReference type="EnsemblPlants" id="OsZS97_06G000040_01">
    <property type="protein sequence ID" value="OsZS97_06G000040_01"/>
    <property type="gene ID" value="OsZS97_06G000040"/>
</dbReference>
<dbReference type="Gramene" id="BGIOSGA022117-TA">
    <property type="protein sequence ID" value="BGIOSGA022117-PA"/>
    <property type="gene ID" value="BGIOSGA022117"/>
</dbReference>
<dbReference type="Gramene" id="OsGoSa_06g0000050.01">
    <property type="protein sequence ID" value="OsGoSa_06g0000050.01"/>
    <property type="gene ID" value="OsGoSa_06g0000050"/>
</dbReference>
<dbReference type="Gramene" id="OsIR64_06g0000040.01">
    <property type="protein sequence ID" value="OsIR64_06g0000040.01"/>
    <property type="gene ID" value="OsIR64_06g0000040"/>
</dbReference>
<dbReference type="Gramene" id="OsKYG_06g0000050.01">
    <property type="protein sequence ID" value="OsKYG_06g0000050.01"/>
    <property type="gene ID" value="OsKYG_06g0000050"/>
</dbReference>
<dbReference type="Gramene" id="OsLaMu_06g0000040.01">
    <property type="protein sequence ID" value="OsLaMu_06g0000040.01"/>
    <property type="gene ID" value="OsLaMu_06g0000040"/>
</dbReference>
<dbReference type="Gramene" id="OsLima_06g0000050.01">
    <property type="protein sequence ID" value="OsLima_06g0000050.01"/>
    <property type="gene ID" value="OsLima_06g0000050"/>
</dbReference>
<dbReference type="Gramene" id="OsLiXu_06g0000040.01">
    <property type="protein sequence ID" value="OsLiXu_06g0000040.01"/>
    <property type="gene ID" value="OsLiXu_06g0000040"/>
</dbReference>
<dbReference type="Gramene" id="OsMH63_06G000040_01">
    <property type="protein sequence ID" value="OsMH63_06G000040_01"/>
    <property type="gene ID" value="OsMH63_06G000040"/>
</dbReference>
<dbReference type="Gramene" id="OsPr106_06g0000050.01">
    <property type="protein sequence ID" value="OsPr106_06g0000050.01"/>
    <property type="gene ID" value="OsPr106_06g0000050"/>
</dbReference>
<dbReference type="Gramene" id="OsZS97_06G000040_01">
    <property type="protein sequence ID" value="OsZS97_06G000040_01"/>
    <property type="gene ID" value="OsZS97_06G000040"/>
</dbReference>
<dbReference type="HOGENOM" id="CLU_084115_0_0_1"/>
<dbReference type="OMA" id="YDYYCEP"/>
<dbReference type="OrthoDB" id="197281at2759"/>
<dbReference type="Proteomes" id="UP000007015">
    <property type="component" value="Chromosome 6"/>
</dbReference>
<dbReference type="GO" id="GO:0009543">
    <property type="term" value="C:chloroplast thylakoid lumen"/>
    <property type="evidence" value="ECO:0007669"/>
    <property type="project" value="TreeGrafter"/>
</dbReference>
<dbReference type="GO" id="GO:0009535">
    <property type="term" value="C:chloroplast thylakoid membrane"/>
    <property type="evidence" value="ECO:0007669"/>
    <property type="project" value="UniProtKB-SubCell"/>
</dbReference>
<dbReference type="GO" id="GO:0005507">
    <property type="term" value="F:copper ion binding"/>
    <property type="evidence" value="ECO:0007669"/>
    <property type="project" value="InterPro"/>
</dbReference>
<dbReference type="GO" id="GO:0046028">
    <property type="term" value="F:electron transporter, transferring electrons from cytochrome b6/f complex of photosystem II activity"/>
    <property type="evidence" value="ECO:0007669"/>
    <property type="project" value="TreeGrafter"/>
</dbReference>
<dbReference type="CDD" id="cd04219">
    <property type="entry name" value="Plastocyanin"/>
    <property type="match status" value="1"/>
</dbReference>
<dbReference type="Gene3D" id="2.60.40.420">
    <property type="entry name" value="Cupredoxins - blue copper proteins"/>
    <property type="match status" value="1"/>
</dbReference>
<dbReference type="InterPro" id="IPR000923">
    <property type="entry name" value="BlueCu_1"/>
</dbReference>
<dbReference type="InterPro" id="IPR028871">
    <property type="entry name" value="BlueCu_1_BS"/>
</dbReference>
<dbReference type="InterPro" id="IPR001235">
    <property type="entry name" value="Copper_blue_Plastocyanin"/>
</dbReference>
<dbReference type="InterPro" id="IPR008972">
    <property type="entry name" value="Cupredoxin"/>
</dbReference>
<dbReference type="InterPro" id="IPR002387">
    <property type="entry name" value="Plastocyanin"/>
</dbReference>
<dbReference type="NCBIfam" id="TIGR02656">
    <property type="entry name" value="cyanin_plasto"/>
    <property type="match status" value="1"/>
</dbReference>
<dbReference type="PANTHER" id="PTHR34192">
    <property type="entry name" value="PLASTOCYANIN MAJOR ISOFORM, CHLOROPLASTIC-RELATED"/>
    <property type="match status" value="1"/>
</dbReference>
<dbReference type="PANTHER" id="PTHR34192:SF10">
    <property type="entry name" value="PLASTOCYANIN MAJOR ISOFORM, CHLOROPLASTIC-RELATED"/>
    <property type="match status" value="1"/>
</dbReference>
<dbReference type="Pfam" id="PF00127">
    <property type="entry name" value="Copper-bind"/>
    <property type="match status" value="1"/>
</dbReference>
<dbReference type="PRINTS" id="PR00156">
    <property type="entry name" value="COPPERBLUE"/>
</dbReference>
<dbReference type="PRINTS" id="PR00157">
    <property type="entry name" value="PLASTOCYANIN"/>
</dbReference>
<dbReference type="SUPFAM" id="SSF49503">
    <property type="entry name" value="Cupredoxins"/>
    <property type="match status" value="1"/>
</dbReference>
<dbReference type="PROSITE" id="PS00196">
    <property type="entry name" value="COPPER_BLUE"/>
    <property type="match status" value="1"/>
</dbReference>
<accession>A2Y886</accession>
<accession>O24185</accession>
<accession>P20423</accession>
<accession>Q5VRI8</accession>
<accession>Q9SBB8</accession>